<name>ATPBM_DAUCA</name>
<gene>
    <name type="primary">ATPB</name>
    <name type="synonym">ATP2</name>
</gene>
<sequence>MASRRLLSSFLRSSTRRSLRPSFSNPRPSFLTSYCSSPASILRRYATAAPAKEPAASKPAGTAGTGKGTITDEKTGAGAIGQVCQIIGAVVDVKFEEGLPPIMTALEVIDFEIRLVLEVAPSLGENTVRTIAMDGTEGLVRGQKVLNTGAPITIPVGRATLGRIINVIGEPIDHRGEIKTDQYLPIHREAPTFVDQATEQQILVTGIKVVDLLAPYQKGGKIGLFGGDWVGKTVLIMELINNVAKAHAVFAGVGERTREGNDLYKEMMESGVIKLGDQQAESKCALVYGQMNEPPGSRARVGLTGLTVAEHFRDAEGEDVLLFVDKRFRFTQANSEVSALLGRIPSAVGYQPTLATDLGGLQERITTTKKGSITSVQAIYVPADDLTDPAPATTFAHLDATTVLSRQISELGIYPAVDPLDSTSRMLTPESGEEHYNTARGVQKVLQNYKNLQDIIAILGMDELSEDDKLTVARARKIQRFLSQPFHVAEIFTGAPGKYVELKECVTSFQGVLDGKYDDLPEQSFYMLGGIEEVIAKAEKMAKENPQ</sequence>
<feature type="transit peptide" description="Mitochondrion" evidence="1">
    <location>
        <begin position="1"/>
        <end position="45"/>
    </location>
</feature>
<feature type="chain" id="PRO_0000002437" description="ATP synthase subunit beta, mitochondrial">
    <location>
        <begin position="46"/>
        <end position="547"/>
    </location>
</feature>
<feature type="region of interest" description="Disordered" evidence="2">
    <location>
        <begin position="52"/>
        <end position="74"/>
    </location>
</feature>
<feature type="compositionally biased region" description="Low complexity" evidence="2">
    <location>
        <begin position="52"/>
        <end position="62"/>
    </location>
</feature>
<feature type="binding site" evidence="1">
    <location>
        <begin position="226"/>
        <end position="233"/>
    </location>
    <ligand>
        <name>ATP</name>
        <dbReference type="ChEBI" id="CHEBI:30616"/>
    </ligand>
</feature>
<comment type="function">
    <text>Mitochondrial membrane ATP synthase (F(1)F(0) ATP synthase or Complex V) produces ATP from ADP in the presence of a proton gradient across the membrane which is generated by electron transport complexes of the respiratory chain. F-type ATPases consist of two structural domains, F(1) - containing the extramembraneous catalytic core, and F(0) - containing the membrane proton channel, linked together by a central stalk and a peripheral stalk. During catalysis, ATP synthesis in the catalytic domain of F(1) is coupled via a rotary mechanism of the central stalk subunits to proton translocation. Subunits alpha and beta form the catalytic core in F(1). Rotation of the central stalk against the surrounding alpha(3)beta(3) subunits leads to hydrolysis of ATP in three separate catalytic sites on the beta subunits.</text>
</comment>
<comment type="catalytic activity">
    <reaction>
        <text>ATP + H2O + 4 H(+)(in) = ADP + phosphate + 5 H(+)(out)</text>
        <dbReference type="Rhea" id="RHEA:57720"/>
        <dbReference type="ChEBI" id="CHEBI:15377"/>
        <dbReference type="ChEBI" id="CHEBI:15378"/>
        <dbReference type="ChEBI" id="CHEBI:30616"/>
        <dbReference type="ChEBI" id="CHEBI:43474"/>
        <dbReference type="ChEBI" id="CHEBI:456216"/>
        <dbReference type="EC" id="7.1.2.2"/>
    </reaction>
</comment>
<comment type="subunit">
    <text>F-type ATPases have 2 components, CF(1) - the catalytic core - and CF(0) - the membrane proton channel. CF(1) has five subunits: alpha(3), beta(3), gamma(1), delta(1), epsilon(1). CF(0) has three main subunits: a, b and c.</text>
</comment>
<comment type="subcellular location">
    <subcellularLocation>
        <location>Mitochondrion</location>
    </subcellularLocation>
    <subcellularLocation>
        <location>Mitochondrion inner membrane</location>
    </subcellularLocation>
    <text>Peripheral membrane protein.</text>
</comment>
<comment type="similarity">
    <text evidence="3">Belongs to the ATPase alpha/beta chains family.</text>
</comment>
<dbReference type="EC" id="7.1.2.2"/>
<dbReference type="EMBL" id="X60303">
    <property type="protein sequence ID" value="CAA42844.1"/>
    <property type="molecule type" value="Genomic_DNA"/>
</dbReference>
<dbReference type="PIR" id="S21988">
    <property type="entry name" value="S21988"/>
</dbReference>
<dbReference type="SMR" id="P37399"/>
<dbReference type="GO" id="GO:0005743">
    <property type="term" value="C:mitochondrial inner membrane"/>
    <property type="evidence" value="ECO:0007669"/>
    <property type="project" value="UniProtKB-SubCell"/>
</dbReference>
<dbReference type="GO" id="GO:0045259">
    <property type="term" value="C:proton-transporting ATP synthase complex"/>
    <property type="evidence" value="ECO:0007669"/>
    <property type="project" value="UniProtKB-KW"/>
</dbReference>
<dbReference type="GO" id="GO:0005524">
    <property type="term" value="F:ATP binding"/>
    <property type="evidence" value="ECO:0007669"/>
    <property type="project" value="UniProtKB-KW"/>
</dbReference>
<dbReference type="GO" id="GO:0016887">
    <property type="term" value="F:ATP hydrolysis activity"/>
    <property type="evidence" value="ECO:0007669"/>
    <property type="project" value="InterPro"/>
</dbReference>
<dbReference type="GO" id="GO:0046933">
    <property type="term" value="F:proton-transporting ATP synthase activity, rotational mechanism"/>
    <property type="evidence" value="ECO:0007669"/>
    <property type="project" value="InterPro"/>
</dbReference>
<dbReference type="GO" id="GO:0042776">
    <property type="term" value="P:proton motive force-driven mitochondrial ATP synthesis"/>
    <property type="evidence" value="ECO:0007669"/>
    <property type="project" value="TreeGrafter"/>
</dbReference>
<dbReference type="CDD" id="cd18110">
    <property type="entry name" value="ATP-synt_F1_beta_C"/>
    <property type="match status" value="1"/>
</dbReference>
<dbReference type="CDD" id="cd18115">
    <property type="entry name" value="ATP-synt_F1_beta_N"/>
    <property type="match status" value="1"/>
</dbReference>
<dbReference type="CDD" id="cd01133">
    <property type="entry name" value="F1-ATPase_beta_CD"/>
    <property type="match status" value="1"/>
</dbReference>
<dbReference type="FunFam" id="1.10.1140.10:FF:000001">
    <property type="entry name" value="ATP synthase subunit beta"/>
    <property type="match status" value="1"/>
</dbReference>
<dbReference type="FunFam" id="2.40.10.170:FF:000006">
    <property type="entry name" value="ATP synthase subunit beta"/>
    <property type="match status" value="1"/>
</dbReference>
<dbReference type="FunFam" id="3.40.50.300:FF:000026">
    <property type="entry name" value="ATP synthase subunit beta"/>
    <property type="match status" value="1"/>
</dbReference>
<dbReference type="Gene3D" id="2.40.10.170">
    <property type="match status" value="1"/>
</dbReference>
<dbReference type="Gene3D" id="1.10.1140.10">
    <property type="entry name" value="Bovine Mitochondrial F1-atpase, Atp Synthase Beta Chain, Chain D, domain 3"/>
    <property type="match status" value="1"/>
</dbReference>
<dbReference type="Gene3D" id="3.40.50.300">
    <property type="entry name" value="P-loop containing nucleotide triphosphate hydrolases"/>
    <property type="match status" value="1"/>
</dbReference>
<dbReference type="HAMAP" id="MF_01347">
    <property type="entry name" value="ATP_synth_beta_bact"/>
    <property type="match status" value="1"/>
</dbReference>
<dbReference type="InterPro" id="IPR055190">
    <property type="entry name" value="ATP-synt_VA_C"/>
</dbReference>
<dbReference type="InterPro" id="IPR020971">
    <property type="entry name" value="ATP_synth_F1_beta_su"/>
</dbReference>
<dbReference type="InterPro" id="IPR005722">
    <property type="entry name" value="ATP_synth_F1_bsu"/>
</dbReference>
<dbReference type="InterPro" id="IPR020003">
    <property type="entry name" value="ATPase_a/bsu_AS"/>
</dbReference>
<dbReference type="InterPro" id="IPR050053">
    <property type="entry name" value="ATPase_alpha/beta_chains"/>
</dbReference>
<dbReference type="InterPro" id="IPR004100">
    <property type="entry name" value="ATPase_F1/V1/A1_a/bsu_N"/>
</dbReference>
<dbReference type="InterPro" id="IPR036121">
    <property type="entry name" value="ATPase_F1/V1/A1_a/bsu_N_sf"/>
</dbReference>
<dbReference type="InterPro" id="IPR000194">
    <property type="entry name" value="ATPase_F1/V1/A1_a/bsu_nucl-bd"/>
</dbReference>
<dbReference type="InterPro" id="IPR024034">
    <property type="entry name" value="ATPase_F1/V1_b/a_C"/>
</dbReference>
<dbReference type="InterPro" id="IPR027417">
    <property type="entry name" value="P-loop_NTPase"/>
</dbReference>
<dbReference type="NCBIfam" id="TIGR01039">
    <property type="entry name" value="atpD"/>
    <property type="match status" value="1"/>
</dbReference>
<dbReference type="PANTHER" id="PTHR15184">
    <property type="entry name" value="ATP SYNTHASE"/>
    <property type="match status" value="1"/>
</dbReference>
<dbReference type="PANTHER" id="PTHR15184:SF82">
    <property type="entry name" value="ATP SYNTHASE SUBUNIT BETA, MITOCHONDRIAL"/>
    <property type="match status" value="1"/>
</dbReference>
<dbReference type="Pfam" id="PF00006">
    <property type="entry name" value="ATP-synt_ab"/>
    <property type="match status" value="1"/>
</dbReference>
<dbReference type="Pfam" id="PF02874">
    <property type="entry name" value="ATP-synt_ab_N"/>
    <property type="match status" value="1"/>
</dbReference>
<dbReference type="Pfam" id="PF22919">
    <property type="entry name" value="ATP-synt_VA_C"/>
    <property type="match status" value="1"/>
</dbReference>
<dbReference type="Pfam" id="PF11421">
    <property type="entry name" value="Synthase_beta"/>
    <property type="match status" value="1"/>
</dbReference>
<dbReference type="PIRSF" id="PIRSF039072">
    <property type="entry name" value="ATPase_subunit_beta"/>
    <property type="match status" value="1"/>
</dbReference>
<dbReference type="SUPFAM" id="SSF47917">
    <property type="entry name" value="C-terminal domain of alpha and beta subunits of F1 ATP synthase"/>
    <property type="match status" value="1"/>
</dbReference>
<dbReference type="SUPFAM" id="SSF50615">
    <property type="entry name" value="N-terminal domain of alpha and beta subunits of F1 ATP synthase"/>
    <property type="match status" value="1"/>
</dbReference>
<dbReference type="SUPFAM" id="SSF52540">
    <property type="entry name" value="P-loop containing nucleoside triphosphate hydrolases"/>
    <property type="match status" value="1"/>
</dbReference>
<dbReference type="PROSITE" id="PS00152">
    <property type="entry name" value="ATPASE_ALPHA_BETA"/>
    <property type="match status" value="1"/>
</dbReference>
<protein>
    <recommendedName>
        <fullName>ATP synthase subunit beta, mitochondrial</fullName>
        <ecNumber>7.1.2.2</ecNumber>
    </recommendedName>
</protein>
<accession>P37399</accession>
<keyword id="KW-0066">ATP synthesis</keyword>
<keyword id="KW-0067">ATP-binding</keyword>
<keyword id="KW-0139">CF(1)</keyword>
<keyword id="KW-0375">Hydrogen ion transport</keyword>
<keyword id="KW-0406">Ion transport</keyword>
<keyword id="KW-0472">Membrane</keyword>
<keyword id="KW-0496">Mitochondrion</keyword>
<keyword id="KW-0999">Mitochondrion inner membrane</keyword>
<keyword id="KW-0547">Nucleotide-binding</keyword>
<keyword id="KW-0809">Transit peptide</keyword>
<keyword id="KW-1278">Translocase</keyword>
<keyword id="KW-0813">Transport</keyword>
<evidence type="ECO:0000250" key="1"/>
<evidence type="ECO:0000256" key="2">
    <source>
        <dbReference type="SAM" id="MobiDB-lite"/>
    </source>
</evidence>
<evidence type="ECO:0000305" key="3"/>
<organism>
    <name type="scientific">Daucus carota</name>
    <name type="common">Wild carrot</name>
    <dbReference type="NCBI Taxonomy" id="4039"/>
    <lineage>
        <taxon>Eukaryota</taxon>
        <taxon>Viridiplantae</taxon>
        <taxon>Streptophyta</taxon>
        <taxon>Embryophyta</taxon>
        <taxon>Tracheophyta</taxon>
        <taxon>Spermatophyta</taxon>
        <taxon>Magnoliopsida</taxon>
        <taxon>eudicotyledons</taxon>
        <taxon>Gunneridae</taxon>
        <taxon>Pentapetalae</taxon>
        <taxon>asterids</taxon>
        <taxon>campanulids</taxon>
        <taxon>Apiales</taxon>
        <taxon>Apiaceae</taxon>
        <taxon>Apioideae</taxon>
        <taxon>Scandiceae</taxon>
        <taxon>Daucinae</taxon>
        <taxon>Daucus</taxon>
        <taxon>Daucus sect. Daucus</taxon>
    </lineage>
</organism>
<proteinExistence type="inferred from homology"/>
<reference key="1">
    <citation type="submission" date="1991-09" db="EMBL/GenBank/DDBJ databases">
        <authorList>
            <person name="Apuya N.R."/>
            <person name="Zimmerman J."/>
        </authorList>
    </citation>
    <scope>NUCLEOTIDE SEQUENCE [GENOMIC DNA]</scope>
    <source>
        <strain>cv. Danvers Half-long</strain>
        <tissue>Callus</tissue>
    </source>
</reference>